<evidence type="ECO:0000255" key="1">
    <source>
        <dbReference type="HAMAP-Rule" id="MF_01637"/>
    </source>
</evidence>
<name>NFUA_PSET1</name>
<dbReference type="EMBL" id="CR954246">
    <property type="protein sequence ID" value="CAI87896.1"/>
    <property type="molecule type" value="Genomic_DNA"/>
</dbReference>
<dbReference type="SMR" id="Q3IJQ5"/>
<dbReference type="STRING" id="326442.PSHAa2860"/>
<dbReference type="KEGG" id="pha:PSHAa2860"/>
<dbReference type="eggNOG" id="COG0316">
    <property type="taxonomic scope" value="Bacteria"/>
</dbReference>
<dbReference type="eggNOG" id="COG0694">
    <property type="taxonomic scope" value="Bacteria"/>
</dbReference>
<dbReference type="HOGENOM" id="CLU_094569_0_0_6"/>
<dbReference type="BioCyc" id="PHAL326442:PSHA_RS14030-MONOMER"/>
<dbReference type="Proteomes" id="UP000006843">
    <property type="component" value="Chromosome I"/>
</dbReference>
<dbReference type="GO" id="GO:0051539">
    <property type="term" value="F:4 iron, 4 sulfur cluster binding"/>
    <property type="evidence" value="ECO:0007669"/>
    <property type="project" value="UniProtKB-UniRule"/>
</dbReference>
<dbReference type="GO" id="GO:0005506">
    <property type="term" value="F:iron ion binding"/>
    <property type="evidence" value="ECO:0007669"/>
    <property type="project" value="InterPro"/>
</dbReference>
<dbReference type="GO" id="GO:0016226">
    <property type="term" value="P:iron-sulfur cluster assembly"/>
    <property type="evidence" value="ECO:0007669"/>
    <property type="project" value="UniProtKB-UniRule"/>
</dbReference>
<dbReference type="GO" id="GO:0051604">
    <property type="term" value="P:protein maturation"/>
    <property type="evidence" value="ECO:0007669"/>
    <property type="project" value="UniProtKB-UniRule"/>
</dbReference>
<dbReference type="Gene3D" id="3.30.300.130">
    <property type="entry name" value="Fe-S cluster assembly (FSCA)"/>
    <property type="match status" value="1"/>
</dbReference>
<dbReference type="Gene3D" id="2.60.300.12">
    <property type="entry name" value="HesB-like domain"/>
    <property type="match status" value="1"/>
</dbReference>
<dbReference type="HAMAP" id="MF_01637">
    <property type="entry name" value="Fe_S_biogen_NfuA"/>
    <property type="match status" value="1"/>
</dbReference>
<dbReference type="InterPro" id="IPR017726">
    <property type="entry name" value="Fe/S_biogenesis_protein_NfuA"/>
</dbReference>
<dbReference type="InterPro" id="IPR000361">
    <property type="entry name" value="FeS_biogenesis"/>
</dbReference>
<dbReference type="InterPro" id="IPR034904">
    <property type="entry name" value="FSCA_dom_sf"/>
</dbReference>
<dbReference type="InterPro" id="IPR035903">
    <property type="entry name" value="HesB-like_dom_sf"/>
</dbReference>
<dbReference type="InterPro" id="IPR001075">
    <property type="entry name" value="NIF_FeS_clus_asmbl_NifU_C"/>
</dbReference>
<dbReference type="NCBIfam" id="NF008392">
    <property type="entry name" value="PRK11190.1"/>
    <property type="match status" value="1"/>
</dbReference>
<dbReference type="NCBIfam" id="TIGR03341">
    <property type="entry name" value="YhgI_GntY"/>
    <property type="match status" value="1"/>
</dbReference>
<dbReference type="PANTHER" id="PTHR11178:SF51">
    <property type="entry name" value="FE_S BIOGENESIS PROTEIN NFUA"/>
    <property type="match status" value="1"/>
</dbReference>
<dbReference type="PANTHER" id="PTHR11178">
    <property type="entry name" value="IRON-SULFUR CLUSTER SCAFFOLD PROTEIN NFU-RELATED"/>
    <property type="match status" value="1"/>
</dbReference>
<dbReference type="Pfam" id="PF01521">
    <property type="entry name" value="Fe-S_biosyn"/>
    <property type="match status" value="1"/>
</dbReference>
<dbReference type="Pfam" id="PF01106">
    <property type="entry name" value="NifU"/>
    <property type="match status" value="1"/>
</dbReference>
<dbReference type="SUPFAM" id="SSF117916">
    <property type="entry name" value="Fe-S cluster assembly (FSCA) domain-like"/>
    <property type="match status" value="1"/>
</dbReference>
<dbReference type="SUPFAM" id="SSF89360">
    <property type="entry name" value="HesB-like domain"/>
    <property type="match status" value="1"/>
</dbReference>
<proteinExistence type="inferred from homology"/>
<feature type="chain" id="PRO_0000268236" description="Fe/S biogenesis protein NfuA">
    <location>
        <begin position="1"/>
        <end position="191"/>
    </location>
</feature>
<feature type="binding site" evidence="1">
    <location>
        <position position="149"/>
    </location>
    <ligand>
        <name>[4Fe-4S] cluster</name>
        <dbReference type="ChEBI" id="CHEBI:49883"/>
    </ligand>
</feature>
<feature type="binding site" evidence="1">
    <location>
        <position position="152"/>
    </location>
    <ligand>
        <name>[4Fe-4S] cluster</name>
        <dbReference type="ChEBI" id="CHEBI:49883"/>
    </ligand>
</feature>
<sequence>MISISETAQAHFAKLLADQAQQTNIRVFVVNPGTSQAECGVSYCPEDAVEDSDIRLNFNGFDGVVDAESAPFLEDAEIDFVTDKMGTQLTLKAPNAKARKISGDASLNERVQHMLETEVNPQLANHGGQVSLVEITAAGIAVLQFGGGCNGCSMIDVTLKEGIEKEMIEKFEEITGVADITEHQAGDHSYY</sequence>
<accession>Q3IJQ5</accession>
<organism>
    <name type="scientific">Pseudoalteromonas translucida (strain TAC 125)</name>
    <dbReference type="NCBI Taxonomy" id="326442"/>
    <lineage>
        <taxon>Bacteria</taxon>
        <taxon>Pseudomonadati</taxon>
        <taxon>Pseudomonadota</taxon>
        <taxon>Gammaproteobacteria</taxon>
        <taxon>Alteromonadales</taxon>
        <taxon>Pseudoalteromonadaceae</taxon>
        <taxon>Pseudoalteromonas</taxon>
    </lineage>
</organism>
<gene>
    <name evidence="1" type="primary">nfuA</name>
    <name type="ordered locus">PSHAa2860</name>
</gene>
<comment type="function">
    <text evidence="1">Involved in iron-sulfur cluster biogenesis. Binds a 4Fe-4S cluster, can transfer this cluster to apoproteins, and thereby intervenes in the maturation of Fe/S proteins. Could also act as a scaffold/chaperone for damaged Fe/S proteins.</text>
</comment>
<comment type="cofactor">
    <cofactor evidence="1">
        <name>[4Fe-4S] cluster</name>
        <dbReference type="ChEBI" id="CHEBI:49883"/>
    </cofactor>
    <text evidence="1">Binds 1 [4Fe-4S] cluster per subunit. The cluster is presumably bound at the interface of two monomers.</text>
</comment>
<comment type="subunit">
    <text evidence="1">Homodimer.</text>
</comment>
<comment type="similarity">
    <text evidence="1">Belongs to the NfuA family.</text>
</comment>
<reference key="1">
    <citation type="journal article" date="2005" name="Genome Res.">
        <title>Coping with cold: the genome of the versatile marine Antarctica bacterium Pseudoalteromonas haloplanktis TAC125.</title>
        <authorList>
            <person name="Medigue C."/>
            <person name="Krin E."/>
            <person name="Pascal G."/>
            <person name="Barbe V."/>
            <person name="Bernsel A."/>
            <person name="Bertin P.N."/>
            <person name="Cheung F."/>
            <person name="Cruveiller S."/>
            <person name="D'Amico S."/>
            <person name="Duilio A."/>
            <person name="Fang G."/>
            <person name="Feller G."/>
            <person name="Ho C."/>
            <person name="Mangenot S."/>
            <person name="Marino G."/>
            <person name="Nilsson J."/>
            <person name="Parrilli E."/>
            <person name="Rocha E.P.C."/>
            <person name="Rouy Z."/>
            <person name="Sekowska A."/>
            <person name="Tutino M.L."/>
            <person name="Vallenet D."/>
            <person name="von Heijne G."/>
            <person name="Danchin A."/>
        </authorList>
    </citation>
    <scope>NUCLEOTIDE SEQUENCE [LARGE SCALE GENOMIC DNA]</scope>
    <source>
        <strain>TAC 125</strain>
    </source>
</reference>
<protein>
    <recommendedName>
        <fullName evidence="1">Fe/S biogenesis protein NfuA</fullName>
    </recommendedName>
</protein>
<keyword id="KW-0004">4Fe-4S</keyword>
<keyword id="KW-0408">Iron</keyword>
<keyword id="KW-0411">Iron-sulfur</keyword>
<keyword id="KW-0479">Metal-binding</keyword>
<keyword id="KW-1185">Reference proteome</keyword>